<accession>Q7RVN0</accession>
<keyword id="KW-0002">3D-structure</keyword>
<keyword id="KW-0963">Cytoplasm</keyword>
<keyword id="KW-1185">Reference proteome</keyword>
<keyword id="KW-0687">Ribonucleoprotein</keyword>
<keyword id="KW-0689">Ribosomal protein</keyword>
<keyword id="KW-0694">RNA-binding</keyword>
<keyword id="KW-0699">rRNA-binding</keyword>
<reference key="1">
    <citation type="journal article" date="2003" name="Nature">
        <title>The genome sequence of the filamentous fungus Neurospora crassa.</title>
        <authorList>
            <person name="Galagan J.E."/>
            <person name="Calvo S.E."/>
            <person name="Borkovich K.A."/>
            <person name="Selker E.U."/>
            <person name="Read N.D."/>
            <person name="Jaffe D.B."/>
            <person name="FitzHugh W."/>
            <person name="Ma L.-J."/>
            <person name="Smirnov S."/>
            <person name="Purcell S."/>
            <person name="Rehman B."/>
            <person name="Elkins T."/>
            <person name="Engels R."/>
            <person name="Wang S."/>
            <person name="Nielsen C.B."/>
            <person name="Butler J."/>
            <person name="Endrizzi M."/>
            <person name="Qui D."/>
            <person name="Ianakiev P."/>
            <person name="Bell-Pedersen D."/>
            <person name="Nelson M.A."/>
            <person name="Werner-Washburne M."/>
            <person name="Selitrennikoff C.P."/>
            <person name="Kinsey J.A."/>
            <person name="Braun E.L."/>
            <person name="Zelter A."/>
            <person name="Schulte U."/>
            <person name="Kothe G.O."/>
            <person name="Jedd G."/>
            <person name="Mewes H.-W."/>
            <person name="Staben C."/>
            <person name="Marcotte E."/>
            <person name="Greenberg D."/>
            <person name="Roy A."/>
            <person name="Foley K."/>
            <person name="Naylor J."/>
            <person name="Stange-Thomann N."/>
            <person name="Barrett R."/>
            <person name="Gnerre S."/>
            <person name="Kamal M."/>
            <person name="Kamvysselis M."/>
            <person name="Mauceli E.W."/>
            <person name="Bielke C."/>
            <person name="Rudd S."/>
            <person name="Frishman D."/>
            <person name="Krystofova S."/>
            <person name="Rasmussen C."/>
            <person name="Metzenberg R.L."/>
            <person name="Perkins D.D."/>
            <person name="Kroken S."/>
            <person name="Cogoni C."/>
            <person name="Macino G."/>
            <person name="Catcheside D.E.A."/>
            <person name="Li W."/>
            <person name="Pratt R.J."/>
            <person name="Osmani S.A."/>
            <person name="DeSouza C.P.C."/>
            <person name="Glass N.L."/>
            <person name="Orbach M.J."/>
            <person name="Berglund J.A."/>
            <person name="Voelker R."/>
            <person name="Yarden O."/>
            <person name="Plamann M."/>
            <person name="Seiler S."/>
            <person name="Dunlap J.C."/>
            <person name="Radford A."/>
            <person name="Aramayo R."/>
            <person name="Natvig D.O."/>
            <person name="Alex L.A."/>
            <person name="Mannhaupt G."/>
            <person name="Ebbole D.J."/>
            <person name="Freitag M."/>
            <person name="Paulsen I."/>
            <person name="Sachs M.S."/>
            <person name="Lander E.S."/>
            <person name="Nusbaum C."/>
            <person name="Birren B.W."/>
        </authorList>
    </citation>
    <scope>NUCLEOTIDE SEQUENCE [LARGE SCALE GENOMIC DNA]</scope>
    <source>
        <strain>ATCC 24698 / 74-OR23-1A / CBS 708.71 / DSM 1257 / FGSC 987</strain>
    </source>
</reference>
<reference evidence="5" key="2">
    <citation type="journal article" date="2021" name="Proc. Natl. Acad. Sci. U.S.A.">
        <title>Structure of the translating Neurospora ribosome arrested by cycloheximide.</title>
        <authorList>
            <person name="Shen L."/>
            <person name="Su Z."/>
            <person name="Yang K."/>
            <person name="Wu C."/>
            <person name="Becker T."/>
            <person name="Bell-Pedersen D."/>
            <person name="Zhang J."/>
            <person name="Sachs M.S."/>
        </authorList>
    </citation>
    <scope>STRUCTURE BY ELECTRON MICROSCOPY (2.70 ANGSTROMS)</scope>
</reference>
<comment type="function">
    <text evidence="4">Component of the ribosome, a large ribonucleoprotein complex responsible for the synthesis of proteins in the cell. The small ribosomal subunit (SSU) binds messenger RNAs (mRNAs) and translates the encoded message by selecting cognate aminoacyl-transfer RNA (tRNA) molecules. The large subunit (LSU) contains the ribosomal catalytic site termed the peptidyl transferase center (PTC), which catalyzes the formation of peptide bonds, thereby polymerizing the amino acids delivered by tRNAs into a polypeptide chain. The nascent polypeptides leave the ribosome through a tunnel in the LSU and interact with protein factors that function in enzymatic processing, targeting, and the membrane insertion of nascent chains at the exit of the ribosomal tunnel.</text>
</comment>
<comment type="subunit">
    <text evidence="1">Component of the large ribosomal subunit (LSU). Mature N.crassa ribosomes consist of a small (40S) and a large (60S) subunit. The 40S small subunit contains 1 molecule of ribosomal RNA (18S rRNA) and at least 32 different proteins. The large 60S subunit contains 3 rRNA molecules (26S, 5.8S and 5S rRNA) and at least 42 different proteins.</text>
</comment>
<comment type="subcellular location">
    <subcellularLocation>
        <location evidence="1">Cytoplasm</location>
    </subcellularLocation>
</comment>
<comment type="similarity">
    <text evidence="3">Belongs to the universal ribosomal protein uL5 family.</text>
</comment>
<protein>
    <recommendedName>
        <fullName evidence="2">Large ribosomal subunit protein uL5</fullName>
    </recommendedName>
    <alternativeName>
        <fullName>60S ribosomal protein L11</fullName>
    </alternativeName>
</protein>
<evidence type="ECO:0000269" key="1">
    <source>
    </source>
</evidence>
<evidence type="ECO:0000303" key="2">
    <source>
    </source>
</evidence>
<evidence type="ECO:0000305" key="3"/>
<evidence type="ECO:0000305" key="4">
    <source>
    </source>
</evidence>
<evidence type="ECO:0007744" key="5">
    <source>
        <dbReference type="PDB" id="7R81"/>
    </source>
</evidence>
<dbReference type="EMBL" id="CM002236">
    <property type="protein sequence ID" value="EAA36404.2"/>
    <property type="molecule type" value="Genomic_DNA"/>
</dbReference>
<dbReference type="RefSeq" id="XP_965640.2">
    <property type="nucleotide sequence ID" value="XM_960547.3"/>
</dbReference>
<dbReference type="PDB" id="7R81">
    <property type="method" value="EM"/>
    <property type="resolution" value="2.70 A"/>
    <property type="chains" value="M1=1-174"/>
</dbReference>
<dbReference type="PDBsum" id="7R81"/>
<dbReference type="EMDB" id="EMD-24307"/>
<dbReference type="SMR" id="Q7RVN0"/>
<dbReference type="FunCoup" id="Q7RVN0">
    <property type="interactions" value="965"/>
</dbReference>
<dbReference type="STRING" id="367110.Q7RVN0"/>
<dbReference type="PaxDb" id="5141-EFNCRP00000002064"/>
<dbReference type="EnsemblFungi" id="EAA36404">
    <property type="protein sequence ID" value="EAA36404"/>
    <property type="gene ID" value="NCU02509"/>
</dbReference>
<dbReference type="GeneID" id="3881790"/>
<dbReference type="KEGG" id="ncr:NCU02509"/>
<dbReference type="VEuPathDB" id="FungiDB:NCU02509"/>
<dbReference type="HOGENOM" id="CLU_061015_3_0_1"/>
<dbReference type="InParanoid" id="Q7RVN0"/>
<dbReference type="OrthoDB" id="1734943at2759"/>
<dbReference type="Proteomes" id="UP000001805">
    <property type="component" value="Chromosome 1, Linkage Group I"/>
</dbReference>
<dbReference type="GO" id="GO:0022625">
    <property type="term" value="C:cytosolic large ribosomal subunit"/>
    <property type="evidence" value="ECO:0000318"/>
    <property type="project" value="GO_Central"/>
</dbReference>
<dbReference type="GO" id="GO:0003723">
    <property type="term" value="F:RNA binding"/>
    <property type="evidence" value="ECO:0000318"/>
    <property type="project" value="GO_Central"/>
</dbReference>
<dbReference type="GO" id="GO:0019843">
    <property type="term" value="F:rRNA binding"/>
    <property type="evidence" value="ECO:0007669"/>
    <property type="project" value="UniProtKB-KW"/>
</dbReference>
<dbReference type="GO" id="GO:0003735">
    <property type="term" value="F:structural constituent of ribosome"/>
    <property type="evidence" value="ECO:0000318"/>
    <property type="project" value="GO_Central"/>
</dbReference>
<dbReference type="GO" id="GO:0006412">
    <property type="term" value="P:translation"/>
    <property type="evidence" value="ECO:0000318"/>
    <property type="project" value="GO_Central"/>
</dbReference>
<dbReference type="FunFam" id="3.30.1440.10:FF:000002">
    <property type="entry name" value="60S ribosomal protein L11"/>
    <property type="match status" value="1"/>
</dbReference>
<dbReference type="Gene3D" id="3.30.1440.10">
    <property type="match status" value="1"/>
</dbReference>
<dbReference type="InterPro" id="IPR002132">
    <property type="entry name" value="Ribosomal_uL5"/>
</dbReference>
<dbReference type="InterPro" id="IPR031309">
    <property type="entry name" value="Ribosomal_uL5_C"/>
</dbReference>
<dbReference type="InterPro" id="IPR020929">
    <property type="entry name" value="Ribosomal_uL5_CS"/>
</dbReference>
<dbReference type="InterPro" id="IPR022803">
    <property type="entry name" value="Ribosomal_uL5_dom_sf"/>
</dbReference>
<dbReference type="InterPro" id="IPR031310">
    <property type="entry name" value="Ribosomal_uL5_N"/>
</dbReference>
<dbReference type="NCBIfam" id="NF003258">
    <property type="entry name" value="PRK04219.1"/>
    <property type="match status" value="1"/>
</dbReference>
<dbReference type="PANTHER" id="PTHR11994">
    <property type="entry name" value="60S RIBOSOMAL PROTEIN L11-RELATED"/>
    <property type="match status" value="1"/>
</dbReference>
<dbReference type="Pfam" id="PF00281">
    <property type="entry name" value="Ribosomal_L5"/>
    <property type="match status" value="1"/>
</dbReference>
<dbReference type="Pfam" id="PF00673">
    <property type="entry name" value="Ribosomal_L5_C"/>
    <property type="match status" value="1"/>
</dbReference>
<dbReference type="PIRSF" id="PIRSF002161">
    <property type="entry name" value="Ribosomal_L5"/>
    <property type="match status" value="1"/>
</dbReference>
<dbReference type="SUPFAM" id="SSF55282">
    <property type="entry name" value="RL5-like"/>
    <property type="match status" value="1"/>
</dbReference>
<dbReference type="PROSITE" id="PS00358">
    <property type="entry name" value="RIBOSOMAL_L5"/>
    <property type="match status" value="1"/>
</dbReference>
<proteinExistence type="evidence at protein level"/>
<organism>
    <name type="scientific">Neurospora crassa (strain ATCC 24698 / 74-OR23-1A / CBS 708.71 / DSM 1257 / FGSC 987)</name>
    <dbReference type="NCBI Taxonomy" id="367110"/>
    <lineage>
        <taxon>Eukaryota</taxon>
        <taxon>Fungi</taxon>
        <taxon>Dikarya</taxon>
        <taxon>Ascomycota</taxon>
        <taxon>Pezizomycotina</taxon>
        <taxon>Sordariomycetes</taxon>
        <taxon>Sordariomycetidae</taxon>
        <taxon>Sordariales</taxon>
        <taxon>Sordariaceae</taxon>
        <taxon>Neurospora</taxon>
    </lineage>
</organism>
<sequence length="174" mass="20084">MSTEQKAQNPMRELRIQKLVLNICVGESGDRLTRAAKVLEQLSGQTPVYSKARYTVRTFGIRRNEKISVHVTVRGPKAEEILERGLKVKEYELRKRNFSETGNFGFGISEHIDLGIKYDPGIGIYGMDFYCCMTRPGERVSRRRRAKSRVGATHRITRDDTVKWFKSRFDAIVR</sequence>
<gene>
    <name type="primary">rpl-11</name>
    <name type="ORF">NCU02509</name>
</gene>
<name>RL11_NEUCR</name>
<feature type="chain" id="PRO_0000260160" description="Large ribosomal subunit protein uL5">
    <location>
        <begin position="1"/>
        <end position="174"/>
    </location>
</feature>